<organism>
    <name type="scientific">Azobacteroides pseudotrichonymphae genomovar. CFP2</name>
    <dbReference type="NCBI Taxonomy" id="511995"/>
    <lineage>
        <taxon>Bacteria</taxon>
        <taxon>Pseudomonadati</taxon>
        <taxon>Bacteroidota</taxon>
        <taxon>Bacteroidia</taxon>
        <taxon>Bacteroidales</taxon>
        <taxon>Candidatus Azobacteroides</taxon>
    </lineage>
</organism>
<protein>
    <recommendedName>
        <fullName evidence="1">Large ribosomal subunit protein uL14</fullName>
    </recommendedName>
    <alternativeName>
        <fullName evidence="2">50S ribosomal protein L14</fullName>
    </alternativeName>
</protein>
<sequence>MIQQESRLIVTDNSGAKEVLCIRVLGGTRRRYASVGDIIVVTVKTVVPSSDIKKGIVSKAIIVRVKKEIRREDGSYIRFDDNACVLLNSTGEIRGSRIFGPVARELRTVNMKIVSLAPEVL</sequence>
<dbReference type="EMBL" id="AP010656">
    <property type="protein sequence ID" value="BAG83347.1"/>
    <property type="molecule type" value="Genomic_DNA"/>
</dbReference>
<dbReference type="RefSeq" id="WP_012573108.1">
    <property type="nucleotide sequence ID" value="NC_011565.1"/>
</dbReference>
<dbReference type="SMR" id="B6YQ75"/>
<dbReference type="STRING" id="511995.CFPG_084"/>
<dbReference type="KEGG" id="aps:CFPG_084"/>
<dbReference type="eggNOG" id="COG0093">
    <property type="taxonomic scope" value="Bacteria"/>
</dbReference>
<dbReference type="HOGENOM" id="CLU_095071_2_1_10"/>
<dbReference type="OrthoDB" id="9806379at2"/>
<dbReference type="Proteomes" id="UP000000723">
    <property type="component" value="Chromosome"/>
</dbReference>
<dbReference type="GO" id="GO:0022625">
    <property type="term" value="C:cytosolic large ribosomal subunit"/>
    <property type="evidence" value="ECO:0007669"/>
    <property type="project" value="TreeGrafter"/>
</dbReference>
<dbReference type="GO" id="GO:0070180">
    <property type="term" value="F:large ribosomal subunit rRNA binding"/>
    <property type="evidence" value="ECO:0007669"/>
    <property type="project" value="TreeGrafter"/>
</dbReference>
<dbReference type="GO" id="GO:0003735">
    <property type="term" value="F:structural constituent of ribosome"/>
    <property type="evidence" value="ECO:0007669"/>
    <property type="project" value="InterPro"/>
</dbReference>
<dbReference type="GO" id="GO:0006412">
    <property type="term" value="P:translation"/>
    <property type="evidence" value="ECO:0007669"/>
    <property type="project" value="UniProtKB-UniRule"/>
</dbReference>
<dbReference type="CDD" id="cd00337">
    <property type="entry name" value="Ribosomal_uL14"/>
    <property type="match status" value="1"/>
</dbReference>
<dbReference type="Gene3D" id="2.40.150.20">
    <property type="entry name" value="Ribosomal protein L14"/>
    <property type="match status" value="1"/>
</dbReference>
<dbReference type="HAMAP" id="MF_01367">
    <property type="entry name" value="Ribosomal_uL14"/>
    <property type="match status" value="1"/>
</dbReference>
<dbReference type="InterPro" id="IPR000218">
    <property type="entry name" value="Ribosomal_uL14"/>
</dbReference>
<dbReference type="InterPro" id="IPR005745">
    <property type="entry name" value="Ribosomal_uL14_bac-type"/>
</dbReference>
<dbReference type="InterPro" id="IPR019972">
    <property type="entry name" value="Ribosomal_uL14_CS"/>
</dbReference>
<dbReference type="InterPro" id="IPR036853">
    <property type="entry name" value="Ribosomal_uL14_sf"/>
</dbReference>
<dbReference type="NCBIfam" id="TIGR01067">
    <property type="entry name" value="rplN_bact"/>
    <property type="match status" value="1"/>
</dbReference>
<dbReference type="PANTHER" id="PTHR11761">
    <property type="entry name" value="50S/60S RIBOSOMAL PROTEIN L14/L23"/>
    <property type="match status" value="1"/>
</dbReference>
<dbReference type="PANTHER" id="PTHR11761:SF3">
    <property type="entry name" value="LARGE RIBOSOMAL SUBUNIT PROTEIN UL14M"/>
    <property type="match status" value="1"/>
</dbReference>
<dbReference type="Pfam" id="PF00238">
    <property type="entry name" value="Ribosomal_L14"/>
    <property type="match status" value="1"/>
</dbReference>
<dbReference type="SMART" id="SM01374">
    <property type="entry name" value="Ribosomal_L14"/>
    <property type="match status" value="1"/>
</dbReference>
<dbReference type="SUPFAM" id="SSF50193">
    <property type="entry name" value="Ribosomal protein L14"/>
    <property type="match status" value="1"/>
</dbReference>
<dbReference type="PROSITE" id="PS00049">
    <property type="entry name" value="RIBOSOMAL_L14"/>
    <property type="match status" value="1"/>
</dbReference>
<feature type="chain" id="PRO_1000144219" description="Large ribosomal subunit protein uL14">
    <location>
        <begin position="1"/>
        <end position="121"/>
    </location>
</feature>
<reference key="1">
    <citation type="journal article" date="2008" name="Science">
        <title>Genome of an endosymbiont coupling N2 fixation to cellulolysis within RT protist cells in termite gut.</title>
        <authorList>
            <person name="Hongoh Y."/>
            <person name="Sharma V.K."/>
            <person name="Prakash T."/>
            <person name="Noda S."/>
            <person name="Toh H."/>
            <person name="Taylor T.D."/>
            <person name="Kudo T."/>
            <person name="Sakaki Y."/>
            <person name="Toyoda A."/>
            <person name="Hattori M."/>
            <person name="Ohkuma M."/>
        </authorList>
    </citation>
    <scope>NUCLEOTIDE SEQUENCE [LARGE SCALE GENOMIC DNA]</scope>
</reference>
<accession>B6YQ75</accession>
<evidence type="ECO:0000255" key="1">
    <source>
        <dbReference type="HAMAP-Rule" id="MF_01367"/>
    </source>
</evidence>
<evidence type="ECO:0000305" key="2"/>
<proteinExistence type="inferred from homology"/>
<gene>
    <name evidence="1" type="primary">rplN</name>
    <name type="ordered locus">CFPG_084</name>
</gene>
<name>RL14_AZOPC</name>
<keyword id="KW-1185">Reference proteome</keyword>
<keyword id="KW-0687">Ribonucleoprotein</keyword>
<keyword id="KW-0689">Ribosomal protein</keyword>
<keyword id="KW-0694">RNA-binding</keyword>
<keyword id="KW-0699">rRNA-binding</keyword>
<comment type="function">
    <text evidence="1">Binds to 23S rRNA. Forms part of two intersubunit bridges in the 70S ribosome.</text>
</comment>
<comment type="subunit">
    <text evidence="1">Part of the 50S ribosomal subunit. Forms a cluster with proteins L3 and L19. In the 70S ribosome, L14 and L19 interact and together make contacts with the 16S rRNA in bridges B5 and B8.</text>
</comment>
<comment type="similarity">
    <text evidence="1">Belongs to the universal ribosomal protein uL14 family.</text>
</comment>